<reference key="1">
    <citation type="journal article" date="2006" name="Proc. Natl. Acad. Sci. U.S.A.">
        <title>Identification of genes subject to positive selection in uropathogenic strains of Escherichia coli: a comparative genomics approach.</title>
        <authorList>
            <person name="Chen S.L."/>
            <person name="Hung C.-S."/>
            <person name="Xu J."/>
            <person name="Reigstad C.S."/>
            <person name="Magrini V."/>
            <person name="Sabo A."/>
            <person name="Blasiar D."/>
            <person name="Bieri T."/>
            <person name="Meyer R.R."/>
            <person name="Ozersky P."/>
            <person name="Armstrong J.R."/>
            <person name="Fulton R.S."/>
            <person name="Latreille J.P."/>
            <person name="Spieth J."/>
            <person name="Hooton T.M."/>
            <person name="Mardis E.R."/>
            <person name="Hultgren S.J."/>
            <person name="Gordon J.I."/>
        </authorList>
    </citation>
    <scope>NUCLEOTIDE SEQUENCE [LARGE SCALE GENOMIC DNA]</scope>
    <source>
        <strain>UTI89 / UPEC</strain>
    </source>
</reference>
<sequence>MAHRPRWTLSQVTELFEKPLLDLLFEAQQVHRQHFDPRQVQVSTLLSIKTGACPEDCKYCPQSSRYKTGLEAERLMEVEQVLESARKAKAAGSTRFCMGAAWKNPHERDMPYLEQMVQGVKAMGLEACMTLGTLSESQAQRLANAGLDYYNHNLDTSPEFYGNIITTRTYQERLDTLEKVREAGIKVCSGGIVGLGETVKDRAGLLLQLANLPTPPESVPINMLVKVKGTPLADNDDVDAFDFIRTIAVARIMMPTSYVRLSAGREQMNEQTQAMCFMAGANSIFYGCKLLTTPNPEEDKDLQLFRKLGLNPQQTAVLAGDNEQQQRLEQALMTPDTDEYYNAAAL</sequence>
<feature type="chain" id="PRO_0000381373" description="Biotin synthase">
    <location>
        <begin position="1"/>
        <end position="346"/>
    </location>
</feature>
<feature type="domain" description="Radical SAM core" evidence="2">
    <location>
        <begin position="38"/>
        <end position="256"/>
    </location>
</feature>
<feature type="binding site" evidence="1">
    <location>
        <position position="53"/>
    </location>
    <ligand>
        <name>[4Fe-4S] cluster</name>
        <dbReference type="ChEBI" id="CHEBI:49883"/>
        <note>4Fe-4S-S-AdoMet</note>
    </ligand>
</feature>
<feature type="binding site" evidence="1">
    <location>
        <position position="57"/>
    </location>
    <ligand>
        <name>[4Fe-4S] cluster</name>
        <dbReference type="ChEBI" id="CHEBI:49883"/>
        <note>4Fe-4S-S-AdoMet</note>
    </ligand>
</feature>
<feature type="binding site" evidence="1">
    <location>
        <position position="60"/>
    </location>
    <ligand>
        <name>[4Fe-4S] cluster</name>
        <dbReference type="ChEBI" id="CHEBI:49883"/>
        <note>4Fe-4S-S-AdoMet</note>
    </ligand>
</feature>
<feature type="binding site" evidence="1">
    <location>
        <position position="97"/>
    </location>
    <ligand>
        <name>[2Fe-2S] cluster</name>
        <dbReference type="ChEBI" id="CHEBI:190135"/>
    </ligand>
</feature>
<feature type="binding site" evidence="1">
    <location>
        <position position="128"/>
    </location>
    <ligand>
        <name>[2Fe-2S] cluster</name>
        <dbReference type="ChEBI" id="CHEBI:190135"/>
    </ligand>
</feature>
<feature type="binding site" evidence="1">
    <location>
        <position position="188"/>
    </location>
    <ligand>
        <name>[2Fe-2S] cluster</name>
        <dbReference type="ChEBI" id="CHEBI:190135"/>
    </ligand>
</feature>
<feature type="binding site" evidence="1">
    <location>
        <position position="260"/>
    </location>
    <ligand>
        <name>[2Fe-2S] cluster</name>
        <dbReference type="ChEBI" id="CHEBI:190135"/>
    </ligand>
</feature>
<comment type="function">
    <text evidence="1">Catalyzes the conversion of dethiobiotin (DTB) to biotin by the insertion of a sulfur atom into dethiobiotin via a radical-based mechanism.</text>
</comment>
<comment type="catalytic activity">
    <reaction evidence="1">
        <text>(4R,5S)-dethiobiotin + (sulfur carrier)-SH + 2 reduced [2Fe-2S]-[ferredoxin] + 2 S-adenosyl-L-methionine = (sulfur carrier)-H + biotin + 2 5'-deoxyadenosine + 2 L-methionine + 2 oxidized [2Fe-2S]-[ferredoxin]</text>
        <dbReference type="Rhea" id="RHEA:22060"/>
        <dbReference type="Rhea" id="RHEA-COMP:10000"/>
        <dbReference type="Rhea" id="RHEA-COMP:10001"/>
        <dbReference type="Rhea" id="RHEA-COMP:14737"/>
        <dbReference type="Rhea" id="RHEA-COMP:14739"/>
        <dbReference type="ChEBI" id="CHEBI:17319"/>
        <dbReference type="ChEBI" id="CHEBI:29917"/>
        <dbReference type="ChEBI" id="CHEBI:33737"/>
        <dbReference type="ChEBI" id="CHEBI:33738"/>
        <dbReference type="ChEBI" id="CHEBI:57586"/>
        <dbReference type="ChEBI" id="CHEBI:57844"/>
        <dbReference type="ChEBI" id="CHEBI:59789"/>
        <dbReference type="ChEBI" id="CHEBI:64428"/>
        <dbReference type="ChEBI" id="CHEBI:149473"/>
        <dbReference type="EC" id="2.8.1.6"/>
    </reaction>
</comment>
<comment type="cofactor">
    <cofactor evidence="1">
        <name>[4Fe-4S] cluster</name>
        <dbReference type="ChEBI" id="CHEBI:49883"/>
    </cofactor>
    <text evidence="1">Binds 1 [4Fe-4S] cluster. The cluster is coordinated with 3 cysteines and an exchangeable S-adenosyl-L-methionine.</text>
</comment>
<comment type="cofactor">
    <cofactor evidence="1">
        <name>[2Fe-2S] cluster</name>
        <dbReference type="ChEBI" id="CHEBI:190135"/>
    </cofactor>
    <text evidence="1">Binds 1 [2Fe-2S] cluster. The cluster is coordinated with 3 cysteines and 1 arginine.</text>
</comment>
<comment type="pathway">
    <text evidence="1">Cofactor biosynthesis; biotin biosynthesis; biotin from 7,8-diaminononanoate: step 2/2.</text>
</comment>
<comment type="subunit">
    <text evidence="1">Homodimer.</text>
</comment>
<comment type="similarity">
    <text evidence="1">Belongs to the radical SAM superfamily. Biotin synthase family.</text>
</comment>
<name>BIOB_ECOUT</name>
<proteinExistence type="inferred from homology"/>
<keyword id="KW-0001">2Fe-2S</keyword>
<keyword id="KW-0004">4Fe-4S</keyword>
<keyword id="KW-0093">Biotin biosynthesis</keyword>
<keyword id="KW-0408">Iron</keyword>
<keyword id="KW-0411">Iron-sulfur</keyword>
<keyword id="KW-0479">Metal-binding</keyword>
<keyword id="KW-0949">S-adenosyl-L-methionine</keyword>
<keyword id="KW-0808">Transferase</keyword>
<evidence type="ECO:0000255" key="1">
    <source>
        <dbReference type="HAMAP-Rule" id="MF_01694"/>
    </source>
</evidence>
<evidence type="ECO:0000255" key="2">
    <source>
        <dbReference type="PROSITE-ProRule" id="PRU01266"/>
    </source>
</evidence>
<dbReference type="EC" id="2.8.1.6" evidence="1"/>
<dbReference type="EMBL" id="CP000243">
    <property type="protein sequence ID" value="ABE06259.1"/>
    <property type="molecule type" value="Genomic_DNA"/>
</dbReference>
<dbReference type="RefSeq" id="WP_000951218.1">
    <property type="nucleotide sequence ID" value="NZ_CP064825.1"/>
</dbReference>
<dbReference type="SMR" id="Q1REF5"/>
<dbReference type="KEGG" id="eci:UTI89_C0773"/>
<dbReference type="HOGENOM" id="CLU_033172_1_2_6"/>
<dbReference type="UniPathway" id="UPA00078">
    <property type="reaction ID" value="UER00162"/>
</dbReference>
<dbReference type="Proteomes" id="UP000001952">
    <property type="component" value="Chromosome"/>
</dbReference>
<dbReference type="GO" id="GO:0051537">
    <property type="term" value="F:2 iron, 2 sulfur cluster binding"/>
    <property type="evidence" value="ECO:0007669"/>
    <property type="project" value="UniProtKB-KW"/>
</dbReference>
<dbReference type="GO" id="GO:0051539">
    <property type="term" value="F:4 iron, 4 sulfur cluster binding"/>
    <property type="evidence" value="ECO:0007669"/>
    <property type="project" value="UniProtKB-KW"/>
</dbReference>
<dbReference type="GO" id="GO:0004076">
    <property type="term" value="F:biotin synthase activity"/>
    <property type="evidence" value="ECO:0007669"/>
    <property type="project" value="UniProtKB-UniRule"/>
</dbReference>
<dbReference type="GO" id="GO:0005506">
    <property type="term" value="F:iron ion binding"/>
    <property type="evidence" value="ECO:0007669"/>
    <property type="project" value="UniProtKB-UniRule"/>
</dbReference>
<dbReference type="GO" id="GO:0009102">
    <property type="term" value="P:biotin biosynthetic process"/>
    <property type="evidence" value="ECO:0007669"/>
    <property type="project" value="UniProtKB-UniRule"/>
</dbReference>
<dbReference type="CDD" id="cd01335">
    <property type="entry name" value="Radical_SAM"/>
    <property type="match status" value="1"/>
</dbReference>
<dbReference type="FunFam" id="3.20.20.70:FF:000011">
    <property type="entry name" value="Biotin synthase"/>
    <property type="match status" value="1"/>
</dbReference>
<dbReference type="Gene3D" id="3.20.20.70">
    <property type="entry name" value="Aldolase class I"/>
    <property type="match status" value="1"/>
</dbReference>
<dbReference type="HAMAP" id="MF_01694">
    <property type="entry name" value="BioB"/>
    <property type="match status" value="1"/>
</dbReference>
<dbReference type="InterPro" id="IPR013785">
    <property type="entry name" value="Aldolase_TIM"/>
</dbReference>
<dbReference type="InterPro" id="IPR010722">
    <property type="entry name" value="BATS_dom"/>
</dbReference>
<dbReference type="InterPro" id="IPR002684">
    <property type="entry name" value="Biotin_synth/BioAB"/>
</dbReference>
<dbReference type="InterPro" id="IPR024177">
    <property type="entry name" value="Biotin_synthase"/>
</dbReference>
<dbReference type="InterPro" id="IPR006638">
    <property type="entry name" value="Elp3/MiaA/NifB-like_rSAM"/>
</dbReference>
<dbReference type="InterPro" id="IPR007197">
    <property type="entry name" value="rSAM"/>
</dbReference>
<dbReference type="NCBIfam" id="TIGR00433">
    <property type="entry name" value="bioB"/>
    <property type="match status" value="1"/>
</dbReference>
<dbReference type="PANTHER" id="PTHR22976">
    <property type="entry name" value="BIOTIN SYNTHASE"/>
    <property type="match status" value="1"/>
</dbReference>
<dbReference type="PANTHER" id="PTHR22976:SF2">
    <property type="entry name" value="BIOTIN SYNTHASE, MITOCHONDRIAL"/>
    <property type="match status" value="1"/>
</dbReference>
<dbReference type="Pfam" id="PF06968">
    <property type="entry name" value="BATS"/>
    <property type="match status" value="1"/>
</dbReference>
<dbReference type="Pfam" id="PF04055">
    <property type="entry name" value="Radical_SAM"/>
    <property type="match status" value="1"/>
</dbReference>
<dbReference type="PIRSF" id="PIRSF001619">
    <property type="entry name" value="Biotin_synth"/>
    <property type="match status" value="1"/>
</dbReference>
<dbReference type="SFLD" id="SFLDG01060">
    <property type="entry name" value="BATS_domain_containing"/>
    <property type="match status" value="1"/>
</dbReference>
<dbReference type="SFLD" id="SFLDF00272">
    <property type="entry name" value="biotin_synthase"/>
    <property type="match status" value="1"/>
</dbReference>
<dbReference type="SMART" id="SM00876">
    <property type="entry name" value="BATS"/>
    <property type="match status" value="1"/>
</dbReference>
<dbReference type="SMART" id="SM00729">
    <property type="entry name" value="Elp3"/>
    <property type="match status" value="1"/>
</dbReference>
<dbReference type="SUPFAM" id="SSF102114">
    <property type="entry name" value="Radical SAM enzymes"/>
    <property type="match status" value="1"/>
</dbReference>
<dbReference type="PROSITE" id="PS51918">
    <property type="entry name" value="RADICAL_SAM"/>
    <property type="match status" value="1"/>
</dbReference>
<gene>
    <name evidence="1" type="primary">bioB</name>
    <name type="ordered locus">UTI89_C0773</name>
</gene>
<accession>Q1REF5</accession>
<protein>
    <recommendedName>
        <fullName evidence="1">Biotin synthase</fullName>
        <ecNumber evidence="1">2.8.1.6</ecNumber>
    </recommendedName>
</protein>
<organism>
    <name type="scientific">Escherichia coli (strain UTI89 / UPEC)</name>
    <dbReference type="NCBI Taxonomy" id="364106"/>
    <lineage>
        <taxon>Bacteria</taxon>
        <taxon>Pseudomonadati</taxon>
        <taxon>Pseudomonadota</taxon>
        <taxon>Gammaproteobacteria</taxon>
        <taxon>Enterobacterales</taxon>
        <taxon>Enterobacteriaceae</taxon>
        <taxon>Escherichia</taxon>
    </lineage>
</organism>